<evidence type="ECO:0000255" key="1">
    <source>
        <dbReference type="HAMAP-Rule" id="MF_01864"/>
    </source>
</evidence>
<evidence type="ECO:0000255" key="2">
    <source>
        <dbReference type="PROSITE-ProRule" id="PRU01266"/>
    </source>
</evidence>
<feature type="chain" id="PRO_0000374628" description="tRNA-2-methylthio-N(6)-dimethylallyladenosine synthase">
    <location>
        <begin position="1"/>
        <end position="442"/>
    </location>
</feature>
<feature type="domain" description="MTTase N-terminal" evidence="1">
    <location>
        <begin position="3"/>
        <end position="120"/>
    </location>
</feature>
<feature type="domain" description="Radical SAM core" evidence="2">
    <location>
        <begin position="143"/>
        <end position="375"/>
    </location>
</feature>
<feature type="domain" description="TRAM" evidence="1">
    <location>
        <begin position="378"/>
        <end position="440"/>
    </location>
</feature>
<feature type="binding site" evidence="1">
    <location>
        <position position="12"/>
    </location>
    <ligand>
        <name>[4Fe-4S] cluster</name>
        <dbReference type="ChEBI" id="CHEBI:49883"/>
        <label>1</label>
    </ligand>
</feature>
<feature type="binding site" evidence="1">
    <location>
        <position position="49"/>
    </location>
    <ligand>
        <name>[4Fe-4S] cluster</name>
        <dbReference type="ChEBI" id="CHEBI:49883"/>
        <label>1</label>
    </ligand>
</feature>
<feature type="binding site" evidence="1">
    <location>
        <position position="83"/>
    </location>
    <ligand>
        <name>[4Fe-4S] cluster</name>
        <dbReference type="ChEBI" id="CHEBI:49883"/>
        <label>1</label>
    </ligand>
</feature>
<feature type="binding site" evidence="1">
    <location>
        <position position="157"/>
    </location>
    <ligand>
        <name>[4Fe-4S] cluster</name>
        <dbReference type="ChEBI" id="CHEBI:49883"/>
        <label>2</label>
        <note>4Fe-4S-S-AdoMet</note>
    </ligand>
</feature>
<feature type="binding site" evidence="1">
    <location>
        <position position="161"/>
    </location>
    <ligand>
        <name>[4Fe-4S] cluster</name>
        <dbReference type="ChEBI" id="CHEBI:49883"/>
        <label>2</label>
        <note>4Fe-4S-S-AdoMet</note>
    </ligand>
</feature>
<feature type="binding site" evidence="1">
    <location>
        <position position="164"/>
    </location>
    <ligand>
        <name>[4Fe-4S] cluster</name>
        <dbReference type="ChEBI" id="CHEBI:49883"/>
        <label>2</label>
        <note>4Fe-4S-S-AdoMet</note>
    </ligand>
</feature>
<name>MIAB_VESOH</name>
<accession>A5CW77</accession>
<reference key="1">
    <citation type="journal article" date="2007" name="Curr. Biol.">
        <title>Reduced genome of the thioautotrophic intracellular symbiont in a deep-sea clam, Calyptogena okutanii.</title>
        <authorList>
            <person name="Kuwahara H."/>
            <person name="Yoshida T."/>
            <person name="Takaki Y."/>
            <person name="Shimamura S."/>
            <person name="Nishi S."/>
            <person name="Harada M."/>
            <person name="Matsuyama K."/>
            <person name="Takishita K."/>
            <person name="Kawato M."/>
            <person name="Uematsu K."/>
            <person name="Fujiwara Y."/>
            <person name="Sato T."/>
            <person name="Kato C."/>
            <person name="Kitagawa M."/>
            <person name="Kato I."/>
            <person name="Maruyama T."/>
        </authorList>
    </citation>
    <scope>NUCLEOTIDE SEQUENCE [LARGE SCALE GENOMIC DNA]</scope>
    <source>
        <strain>HA</strain>
    </source>
</reference>
<proteinExistence type="inferred from homology"/>
<dbReference type="EC" id="2.8.4.3" evidence="1"/>
<dbReference type="EMBL" id="AP009247">
    <property type="protein sequence ID" value="BAF61800.1"/>
    <property type="molecule type" value="Genomic_DNA"/>
</dbReference>
<dbReference type="RefSeq" id="WP_011930070.1">
    <property type="nucleotide sequence ID" value="NC_009465.1"/>
</dbReference>
<dbReference type="SMR" id="A5CW77"/>
<dbReference type="STRING" id="412965.COSY_0688"/>
<dbReference type="KEGG" id="vok:COSY_0688"/>
<dbReference type="eggNOG" id="COG0621">
    <property type="taxonomic scope" value="Bacteria"/>
</dbReference>
<dbReference type="HOGENOM" id="CLU_018697_2_2_6"/>
<dbReference type="OrthoDB" id="9805215at2"/>
<dbReference type="Proteomes" id="UP000000247">
    <property type="component" value="Chromosome"/>
</dbReference>
<dbReference type="GO" id="GO:0005829">
    <property type="term" value="C:cytosol"/>
    <property type="evidence" value="ECO:0007669"/>
    <property type="project" value="TreeGrafter"/>
</dbReference>
<dbReference type="GO" id="GO:0051539">
    <property type="term" value="F:4 iron, 4 sulfur cluster binding"/>
    <property type="evidence" value="ECO:0007669"/>
    <property type="project" value="UniProtKB-UniRule"/>
</dbReference>
<dbReference type="GO" id="GO:0046872">
    <property type="term" value="F:metal ion binding"/>
    <property type="evidence" value="ECO:0007669"/>
    <property type="project" value="UniProtKB-KW"/>
</dbReference>
<dbReference type="GO" id="GO:0035597">
    <property type="term" value="F:N6-isopentenyladenosine methylthiotransferase activity"/>
    <property type="evidence" value="ECO:0007669"/>
    <property type="project" value="TreeGrafter"/>
</dbReference>
<dbReference type="CDD" id="cd01335">
    <property type="entry name" value="Radical_SAM"/>
    <property type="match status" value="1"/>
</dbReference>
<dbReference type="FunFam" id="3.40.50.12160:FF:000001">
    <property type="entry name" value="tRNA-2-methylthio-N(6)-dimethylallyladenosine synthase"/>
    <property type="match status" value="1"/>
</dbReference>
<dbReference type="FunFam" id="3.80.30.20:FF:000001">
    <property type="entry name" value="tRNA-2-methylthio-N(6)-dimethylallyladenosine synthase 2"/>
    <property type="match status" value="1"/>
</dbReference>
<dbReference type="Gene3D" id="3.40.50.12160">
    <property type="entry name" value="Methylthiotransferase, N-terminal domain"/>
    <property type="match status" value="1"/>
</dbReference>
<dbReference type="Gene3D" id="3.80.30.20">
    <property type="entry name" value="tm_1862 like domain"/>
    <property type="match status" value="1"/>
</dbReference>
<dbReference type="HAMAP" id="MF_01864">
    <property type="entry name" value="tRNA_metthiotr_MiaB"/>
    <property type="match status" value="1"/>
</dbReference>
<dbReference type="InterPro" id="IPR006638">
    <property type="entry name" value="Elp3/MiaA/NifB-like_rSAM"/>
</dbReference>
<dbReference type="InterPro" id="IPR005839">
    <property type="entry name" value="Methylthiotransferase"/>
</dbReference>
<dbReference type="InterPro" id="IPR020612">
    <property type="entry name" value="Methylthiotransferase_CS"/>
</dbReference>
<dbReference type="InterPro" id="IPR013848">
    <property type="entry name" value="Methylthiotransferase_N"/>
</dbReference>
<dbReference type="InterPro" id="IPR038135">
    <property type="entry name" value="Methylthiotransferase_N_sf"/>
</dbReference>
<dbReference type="InterPro" id="IPR006463">
    <property type="entry name" value="MiaB_methiolase"/>
</dbReference>
<dbReference type="InterPro" id="IPR007197">
    <property type="entry name" value="rSAM"/>
</dbReference>
<dbReference type="InterPro" id="IPR023404">
    <property type="entry name" value="rSAM_horseshoe"/>
</dbReference>
<dbReference type="InterPro" id="IPR002792">
    <property type="entry name" value="TRAM_dom"/>
</dbReference>
<dbReference type="NCBIfam" id="TIGR01574">
    <property type="entry name" value="miaB-methiolase"/>
    <property type="match status" value="1"/>
</dbReference>
<dbReference type="NCBIfam" id="TIGR00089">
    <property type="entry name" value="MiaB/RimO family radical SAM methylthiotransferase"/>
    <property type="match status" value="1"/>
</dbReference>
<dbReference type="PANTHER" id="PTHR43020">
    <property type="entry name" value="CDK5 REGULATORY SUBUNIT-ASSOCIATED PROTEIN 1"/>
    <property type="match status" value="1"/>
</dbReference>
<dbReference type="PANTHER" id="PTHR43020:SF2">
    <property type="entry name" value="MITOCHONDRIAL TRNA METHYLTHIOTRANSFERASE CDK5RAP1"/>
    <property type="match status" value="1"/>
</dbReference>
<dbReference type="Pfam" id="PF04055">
    <property type="entry name" value="Radical_SAM"/>
    <property type="match status" value="1"/>
</dbReference>
<dbReference type="Pfam" id="PF01938">
    <property type="entry name" value="TRAM"/>
    <property type="match status" value="1"/>
</dbReference>
<dbReference type="Pfam" id="PF00919">
    <property type="entry name" value="UPF0004"/>
    <property type="match status" value="1"/>
</dbReference>
<dbReference type="SFLD" id="SFLDF00273">
    <property type="entry name" value="(dimethylallyl)adenosine_tRNA"/>
    <property type="match status" value="1"/>
</dbReference>
<dbReference type="SFLD" id="SFLDG01082">
    <property type="entry name" value="B12-binding_domain_containing"/>
    <property type="match status" value="1"/>
</dbReference>
<dbReference type="SFLD" id="SFLDS00029">
    <property type="entry name" value="Radical_SAM"/>
    <property type="match status" value="1"/>
</dbReference>
<dbReference type="SMART" id="SM00729">
    <property type="entry name" value="Elp3"/>
    <property type="match status" value="1"/>
</dbReference>
<dbReference type="SUPFAM" id="SSF102114">
    <property type="entry name" value="Radical SAM enzymes"/>
    <property type="match status" value="1"/>
</dbReference>
<dbReference type="PROSITE" id="PS51449">
    <property type="entry name" value="MTTASE_N"/>
    <property type="match status" value="1"/>
</dbReference>
<dbReference type="PROSITE" id="PS01278">
    <property type="entry name" value="MTTASE_RADICAL"/>
    <property type="match status" value="1"/>
</dbReference>
<dbReference type="PROSITE" id="PS51918">
    <property type="entry name" value="RADICAL_SAM"/>
    <property type="match status" value="1"/>
</dbReference>
<dbReference type="PROSITE" id="PS50926">
    <property type="entry name" value="TRAM"/>
    <property type="match status" value="1"/>
</dbReference>
<comment type="function">
    <text evidence="1">Catalyzes the methylthiolation of N6-(dimethylallyl)adenosine (i(6)A), leading to the formation of 2-methylthio-N6-(dimethylallyl)adenosine (ms(2)i(6)A) at position 37 in tRNAs that read codons beginning with uridine.</text>
</comment>
<comment type="catalytic activity">
    <reaction evidence="1">
        <text>N(6)-dimethylallyladenosine(37) in tRNA + (sulfur carrier)-SH + AH2 + 2 S-adenosyl-L-methionine = 2-methylsulfanyl-N(6)-dimethylallyladenosine(37) in tRNA + (sulfur carrier)-H + 5'-deoxyadenosine + L-methionine + A + S-adenosyl-L-homocysteine + 2 H(+)</text>
        <dbReference type="Rhea" id="RHEA:37067"/>
        <dbReference type="Rhea" id="RHEA-COMP:10375"/>
        <dbReference type="Rhea" id="RHEA-COMP:10376"/>
        <dbReference type="Rhea" id="RHEA-COMP:14737"/>
        <dbReference type="Rhea" id="RHEA-COMP:14739"/>
        <dbReference type="ChEBI" id="CHEBI:13193"/>
        <dbReference type="ChEBI" id="CHEBI:15378"/>
        <dbReference type="ChEBI" id="CHEBI:17319"/>
        <dbReference type="ChEBI" id="CHEBI:17499"/>
        <dbReference type="ChEBI" id="CHEBI:29917"/>
        <dbReference type="ChEBI" id="CHEBI:57844"/>
        <dbReference type="ChEBI" id="CHEBI:57856"/>
        <dbReference type="ChEBI" id="CHEBI:59789"/>
        <dbReference type="ChEBI" id="CHEBI:64428"/>
        <dbReference type="ChEBI" id="CHEBI:74415"/>
        <dbReference type="ChEBI" id="CHEBI:74417"/>
        <dbReference type="EC" id="2.8.4.3"/>
    </reaction>
</comment>
<comment type="cofactor">
    <cofactor evidence="1">
        <name>[4Fe-4S] cluster</name>
        <dbReference type="ChEBI" id="CHEBI:49883"/>
    </cofactor>
    <text evidence="1">Binds 2 [4Fe-4S] clusters. One cluster is coordinated with 3 cysteines and an exchangeable S-adenosyl-L-methionine.</text>
</comment>
<comment type="subunit">
    <text evidence="1">Monomer.</text>
</comment>
<comment type="subcellular location">
    <subcellularLocation>
        <location evidence="1">Cytoplasm</location>
    </subcellularLocation>
</comment>
<comment type="similarity">
    <text evidence="1">Belongs to the methylthiotransferase family. MiaB subfamily.</text>
</comment>
<protein>
    <recommendedName>
        <fullName evidence="1">tRNA-2-methylthio-N(6)-dimethylallyladenosine synthase</fullName>
        <ecNumber evidence="1">2.8.4.3</ecNumber>
    </recommendedName>
    <alternativeName>
        <fullName evidence="1">(Dimethylallyl)adenosine tRNA methylthiotransferase MiaB</fullName>
    </alternativeName>
    <alternativeName>
        <fullName evidence="1">tRNA-i(6)A37 methylthiotransferase</fullName>
    </alternativeName>
</protein>
<keyword id="KW-0004">4Fe-4S</keyword>
<keyword id="KW-0963">Cytoplasm</keyword>
<keyword id="KW-0408">Iron</keyword>
<keyword id="KW-0411">Iron-sulfur</keyword>
<keyword id="KW-0479">Metal-binding</keyword>
<keyword id="KW-1185">Reference proteome</keyword>
<keyword id="KW-0949">S-adenosyl-L-methionine</keyword>
<keyword id="KW-0808">Transferase</keyword>
<keyword id="KW-0819">tRNA processing</keyword>
<gene>
    <name evidence="1" type="primary">miaB</name>
    <name type="ordered locus">COSY_0688</name>
</gene>
<sequence>MINKLYIRTFGCQMNEYDSNKMVDILKHSHDLTLTDDATSADVLLLNTCSIREKAQDKLFHQLGRWSKLKNKNPNLIIGVGGCVASQEGELILKRTPYVDIIFGPQTLHRLPNMLNDALNNKKTSIDISFPEIEKFDHLPKPRTNSVTAFVSIMEGCSKYCTFCIVPYTRGEEISRPFNDVINEVKILASQGVREINLLGQNVNAYQGSMNDGEVSDLALLINIVAKISGIKRIRYTTSHPNQFSDSLIEAYAEVPELVSHLHLPVQSGSDKILRLMKRGYMSIEYKSKIRKLRKIRPDISISSDFIIGFPGENEKDFLDTMILIDEIGFDKSFSFIYSVRPGTPAASYPDDIDIQVKKQRLALIQKTINNNTEHISQLMIGSIQKVLVENITKKGNELFGRTENMRNTHFKGDKSLIGQIVNVKITKGRGNSLMGDLLTQI</sequence>
<organism>
    <name type="scientific">Vesicomyosocius okutanii subsp. Calyptogena okutanii (strain HA)</name>
    <dbReference type="NCBI Taxonomy" id="412965"/>
    <lineage>
        <taxon>Bacteria</taxon>
        <taxon>Pseudomonadati</taxon>
        <taxon>Pseudomonadota</taxon>
        <taxon>Gammaproteobacteria</taxon>
        <taxon>Candidatus Pseudothioglobaceae</taxon>
        <taxon>Candidatus Vesicomyosocius</taxon>
    </lineage>
</organism>